<feature type="chain" id="PRO_1000100822" description="UPF0122 protein Teth514_1714">
    <location>
        <begin position="1"/>
        <end position="117"/>
    </location>
</feature>
<proteinExistence type="inferred from homology"/>
<evidence type="ECO:0000255" key="1">
    <source>
        <dbReference type="HAMAP-Rule" id="MF_00245"/>
    </source>
</evidence>
<organism>
    <name type="scientific">Thermoanaerobacter sp. (strain X514)</name>
    <dbReference type="NCBI Taxonomy" id="399726"/>
    <lineage>
        <taxon>Bacteria</taxon>
        <taxon>Bacillati</taxon>
        <taxon>Bacillota</taxon>
        <taxon>Clostridia</taxon>
        <taxon>Thermoanaerobacterales</taxon>
        <taxon>Thermoanaerobacteraceae</taxon>
        <taxon>Thermoanaerobacter</taxon>
    </lineage>
</organism>
<accession>B0K1V2</accession>
<dbReference type="EMBL" id="CP000923">
    <property type="protein sequence ID" value="ABY93000.1"/>
    <property type="molecule type" value="Genomic_DNA"/>
</dbReference>
<dbReference type="RefSeq" id="WP_003866677.1">
    <property type="nucleotide sequence ID" value="NC_010320.1"/>
</dbReference>
<dbReference type="SMR" id="B0K1V2"/>
<dbReference type="KEGG" id="tex:Teth514_1714"/>
<dbReference type="HOGENOM" id="CLU_129218_0_2_9"/>
<dbReference type="Proteomes" id="UP000002155">
    <property type="component" value="Chromosome"/>
</dbReference>
<dbReference type="Gene3D" id="1.10.10.10">
    <property type="entry name" value="Winged helix-like DNA-binding domain superfamily/Winged helix DNA-binding domain"/>
    <property type="match status" value="1"/>
</dbReference>
<dbReference type="HAMAP" id="MF_00245">
    <property type="entry name" value="UPF0122"/>
    <property type="match status" value="1"/>
</dbReference>
<dbReference type="InterPro" id="IPR013324">
    <property type="entry name" value="RNA_pol_sigma_r3/r4-like"/>
</dbReference>
<dbReference type="InterPro" id="IPR007394">
    <property type="entry name" value="UPF0122"/>
</dbReference>
<dbReference type="InterPro" id="IPR054831">
    <property type="entry name" value="UPF0122_fam_protein"/>
</dbReference>
<dbReference type="InterPro" id="IPR036388">
    <property type="entry name" value="WH-like_DNA-bd_sf"/>
</dbReference>
<dbReference type="NCBIfam" id="NF001071">
    <property type="entry name" value="PRK00118.2-1"/>
    <property type="match status" value="1"/>
</dbReference>
<dbReference type="NCBIfam" id="NF045758">
    <property type="entry name" value="YlxM"/>
    <property type="match status" value="1"/>
</dbReference>
<dbReference type="PANTHER" id="PTHR40083">
    <property type="entry name" value="UPF0122 PROTEIN CBO2450/CLC_2298"/>
    <property type="match status" value="1"/>
</dbReference>
<dbReference type="PANTHER" id="PTHR40083:SF1">
    <property type="entry name" value="UPF0122 PROTEIN YLXM"/>
    <property type="match status" value="1"/>
</dbReference>
<dbReference type="Pfam" id="PF04297">
    <property type="entry name" value="UPF0122"/>
    <property type="match status" value="1"/>
</dbReference>
<dbReference type="SUPFAM" id="SSF88659">
    <property type="entry name" value="Sigma3 and sigma4 domains of RNA polymerase sigma factors"/>
    <property type="match status" value="1"/>
</dbReference>
<protein>
    <recommendedName>
        <fullName evidence="1">UPF0122 protein Teth514_1714</fullName>
    </recommendedName>
</protein>
<sequence>MDDDFLFMTLLYDFYGALLTDKQREIFEMYYLNDYSLGEISELLDISRQGVYDTLKRAESSLEFFEEKLGLVKRHQEIMNKLDKIKKGIEIIRERERDPEILKIIEEIAREIEELNL</sequence>
<gene>
    <name type="ordered locus">Teth514_1714</name>
</gene>
<name>Y1714_THEPX</name>
<reference key="1">
    <citation type="submission" date="2008-01" db="EMBL/GenBank/DDBJ databases">
        <title>Complete sequence of Thermoanaerobacter sp. X514.</title>
        <authorList>
            <consortium name="US DOE Joint Genome Institute"/>
            <person name="Copeland A."/>
            <person name="Lucas S."/>
            <person name="Lapidus A."/>
            <person name="Barry K."/>
            <person name="Glavina del Rio T."/>
            <person name="Dalin E."/>
            <person name="Tice H."/>
            <person name="Pitluck S."/>
            <person name="Bruce D."/>
            <person name="Goodwin L."/>
            <person name="Saunders E."/>
            <person name="Brettin T."/>
            <person name="Detter J.C."/>
            <person name="Han C."/>
            <person name="Schmutz J."/>
            <person name="Larimer F."/>
            <person name="Land M."/>
            <person name="Hauser L."/>
            <person name="Kyrpides N."/>
            <person name="Kim E."/>
            <person name="Hemme C."/>
            <person name="Fields M.W."/>
            <person name="He Z."/>
            <person name="Zhou J."/>
            <person name="Richardson P."/>
        </authorList>
    </citation>
    <scope>NUCLEOTIDE SEQUENCE [LARGE SCALE GENOMIC DNA]</scope>
    <source>
        <strain>X514</strain>
    </source>
</reference>
<comment type="function">
    <text evidence="1">Might take part in the signal recognition particle (SRP) pathway. This is inferred from the conservation of its genetic proximity to ftsY/ffh. May be a regulatory protein.</text>
</comment>
<comment type="similarity">
    <text evidence="1">Belongs to the UPF0122 family.</text>
</comment>